<protein>
    <recommendedName>
        <fullName>COMM domain-containing protein 7</fullName>
    </recommendedName>
</protein>
<evidence type="ECO:0000255" key="1">
    <source>
        <dbReference type="PROSITE-ProRule" id="PRU00602"/>
    </source>
</evidence>
<evidence type="ECO:0000269" key="2">
    <source>
    </source>
</evidence>
<evidence type="ECO:0000269" key="3">
    <source>
    </source>
</evidence>
<evidence type="ECO:0000269" key="4">
    <source>
    </source>
</evidence>
<evidence type="ECO:0000269" key="5">
    <source>
    </source>
</evidence>
<evidence type="ECO:0000269" key="6">
    <source>
    </source>
</evidence>
<evidence type="ECO:0000269" key="7">
    <source>
    </source>
</evidence>
<evidence type="ECO:0000269" key="8">
    <source>
    </source>
</evidence>
<evidence type="ECO:0000303" key="9">
    <source>
    </source>
</evidence>
<evidence type="ECO:0000305" key="10"/>
<evidence type="ECO:0000305" key="11">
    <source>
    </source>
</evidence>
<evidence type="ECO:0007744" key="12">
    <source>
        <dbReference type="PDB" id="8ESD"/>
    </source>
</evidence>
<evidence type="ECO:0007744" key="13">
    <source>
        <dbReference type="PDB" id="8F2R"/>
    </source>
</evidence>
<evidence type="ECO:0007744" key="14">
    <source>
        <dbReference type="PDB" id="8F2U"/>
    </source>
</evidence>
<evidence type="ECO:0007744" key="15">
    <source>
        <dbReference type="PDB" id="8P0W"/>
    </source>
</evidence>
<evidence type="ECO:0007829" key="16">
    <source>
        <dbReference type="PDB" id="8P0W"/>
    </source>
</evidence>
<comment type="function">
    <text evidence="2 7 8 11">Scaffold protein in the commander complex that is essential for endosomal recycling of transmembrane cargos; the commander complex is composed of the CCC subcomplex and the retriever subcomplex (PubMed:37172566, PubMed:38459129). May modulate activity of cullin-RING E3 ubiquitin ligase (CRL) complexes (PubMed:21778237). Associates with the NF-kappa-B complex and suppresses its transcriptional activity (PubMed:15799966).</text>
</comment>
<comment type="subunit">
    <text evidence="2 3 4 5 6 7 8">Component of the commander complex consisting of the CCC subcomplex and the retriever subcomplex (PubMed:37172566, PubMed:38459129, PubMed:25355947, PubMed:15799966). Component of the CCC (COMMD/CCDC22/CCDC93) subcomplex consisting of COMMD1, COMMD2, COMMD3, COMMD4, COMMD5, COMMD6, COMMD7, COMMD8, COMMD9, COMMD10, CCDC22 and CCDC93; within the complex forms a heterodimer with COMMD9 (PubMed:37172566, PubMed:38459129, PubMed:15799966, PubMed:23563313, PubMed:25355947). Interacts with RELA (PubMed:15799966). Interacts with CCDC22, CCDC93, SCNN1B, CUL7 (PubMed:21778237, PubMed:23637203, PubMed:23563313, PubMed:25355947).</text>
</comment>
<comment type="interaction">
    <interactant intactId="EBI-1550280">
        <id>Q86VX2</id>
    </interactant>
    <interactant intactId="EBI-3943153">
        <id>O60826</id>
        <label>CCDC22</label>
    </interactant>
    <organismsDiffer>false</organismsDiffer>
    <experiments>10</experiments>
</comment>
<comment type="interaction">
    <interactant intactId="EBI-1550280">
        <id>Q86VX2</id>
    </interactant>
    <interactant intactId="EBI-1104769">
        <id>Q567U6</id>
        <label>CCDC93</label>
    </interactant>
    <organismsDiffer>false</organismsDiffer>
    <experiments>3</experiments>
</comment>
<comment type="interaction">
    <interactant intactId="EBI-1550280">
        <id>Q86VX2</id>
    </interactant>
    <interactant intactId="EBI-1550112">
        <id>Q8N668</id>
        <label>COMMD1</label>
    </interactant>
    <organismsDiffer>false</organismsDiffer>
    <experiments>6</experiments>
</comment>
<comment type="subcellular location">
    <subcellularLocation>
        <location evidence="3">Cytoplasmic vesicle</location>
    </subcellularLocation>
</comment>
<comment type="alternative products">
    <event type="alternative splicing"/>
    <isoform>
        <id>Q86VX2-1</id>
        <name>1</name>
        <sequence type="displayed"/>
    </isoform>
    <isoform>
        <id>Q86VX2-2</id>
        <name>2</name>
        <sequence type="described" ref="VSP_038372"/>
    </isoform>
</comment>
<comment type="tissue specificity">
    <text evidence="2">Widely expressed with highest expression in lung.</text>
</comment>
<comment type="similarity">
    <text evidence="10">Belongs to the COMM domain-containing protein 7 family.</text>
</comment>
<accession>Q86VX2</accession>
<accession>A2BHJ2</accession>
<accession>B3KTZ2</accession>
<accession>Q5JYB0</accession>
<accession>Q96SI7</accession>
<accession>Q9BW53</accession>
<sequence length="200" mass="22540">MGRLHCTEDPVPEAVGGDMQQLNQLGAQQFSALTEVLFHFLTEPKEVERFLAQLSEFATTNQISLGSLRSIVKSLLLVPNGALKKSLTAKQVQADFITLGLSEEKATYFSEKWKQNAPTLARWAIGQTLMINQLIDMEWKFGVTSGSSELEKVGSIFLQLKLVVKKGNQTENVYIELTLPQFYSFLHEMERVRTSMECFC</sequence>
<feature type="chain" id="PRO_0000077399" description="COMM domain-containing protein 7">
    <location>
        <begin position="1"/>
        <end position="200"/>
    </location>
</feature>
<feature type="domain" description="COMM" evidence="1">
    <location>
        <begin position="133"/>
        <end position="200"/>
    </location>
</feature>
<feature type="splice variant" id="VSP_038372" description="In isoform 2." evidence="9">
    <location>
        <position position="29"/>
    </location>
</feature>
<feature type="sequence conflict" description="In Ref. 1; AAS22244 and 5; AAH47440." evidence="10" ref="1 5">
    <original>P</original>
    <variation>Q</variation>
    <location>
        <position position="44"/>
    </location>
</feature>
<feature type="sequence conflict" description="In Ref. 1; AAS22244 and 5; AAH47440." evidence="10" ref="1 5">
    <original>A</original>
    <variation>T</variation>
    <location>
        <position position="117"/>
    </location>
</feature>
<feature type="sequence conflict" description="In Ref. 1; AAS22244 and 5; AAH47440." evidence="10" ref="1 5">
    <original>E</original>
    <variation>K</variation>
    <location>
        <position position="171"/>
    </location>
</feature>
<feature type="helix" evidence="16">
    <location>
        <begin position="14"/>
        <end position="24"/>
    </location>
</feature>
<feature type="helix" evidence="16">
    <location>
        <begin position="27"/>
        <end position="41"/>
    </location>
</feature>
<feature type="helix" evidence="16">
    <location>
        <begin position="47"/>
        <end position="61"/>
    </location>
</feature>
<feature type="helix" evidence="16">
    <location>
        <begin position="65"/>
        <end position="85"/>
    </location>
</feature>
<feature type="helix" evidence="16">
    <location>
        <begin position="89"/>
        <end position="99"/>
    </location>
</feature>
<feature type="helix" evidence="16">
    <location>
        <begin position="103"/>
        <end position="127"/>
    </location>
</feature>
<feature type="strand" evidence="16">
    <location>
        <begin position="131"/>
        <end position="149"/>
    </location>
</feature>
<feature type="strand" evidence="16">
    <location>
        <begin position="155"/>
        <end position="166"/>
    </location>
</feature>
<feature type="strand" evidence="16">
    <location>
        <begin position="169"/>
        <end position="178"/>
    </location>
</feature>
<feature type="helix" evidence="16">
    <location>
        <begin position="179"/>
        <end position="196"/>
    </location>
</feature>
<proteinExistence type="evidence at protein level"/>
<reference key="1">
    <citation type="journal article" date="2005" name="J. Biol. Chem.">
        <title>COMMD proteins, a novel family of structural and functional homologs of MURR1.</title>
        <authorList>
            <person name="Burstein E."/>
            <person name="Hoberg J.E."/>
            <person name="Wilkinson A.S."/>
            <person name="Rumble J.M."/>
            <person name="Csomos R.A."/>
            <person name="Komarck C.M."/>
            <person name="Maine G.N."/>
            <person name="Wilkinson J.C."/>
            <person name="Mayo M.W."/>
            <person name="Duckett C.S."/>
        </authorList>
    </citation>
    <scope>NUCLEOTIDE SEQUENCE [MRNA] (ISOFORM 1)</scope>
    <scope>FUNCTION</scope>
    <scope>SUBUNIT</scope>
    <scope>TISSUE SPECIFICITY</scope>
</reference>
<reference key="2">
    <citation type="journal article" date="2004" name="Nat. Genet.">
        <title>Complete sequencing and characterization of 21,243 full-length human cDNAs.</title>
        <authorList>
            <person name="Ota T."/>
            <person name="Suzuki Y."/>
            <person name="Nishikawa T."/>
            <person name="Otsuki T."/>
            <person name="Sugiyama T."/>
            <person name="Irie R."/>
            <person name="Wakamatsu A."/>
            <person name="Hayashi K."/>
            <person name="Sato H."/>
            <person name="Nagai K."/>
            <person name="Kimura K."/>
            <person name="Makita H."/>
            <person name="Sekine M."/>
            <person name="Obayashi M."/>
            <person name="Nishi T."/>
            <person name="Shibahara T."/>
            <person name="Tanaka T."/>
            <person name="Ishii S."/>
            <person name="Yamamoto J."/>
            <person name="Saito K."/>
            <person name="Kawai Y."/>
            <person name="Isono Y."/>
            <person name="Nakamura Y."/>
            <person name="Nagahari K."/>
            <person name="Murakami K."/>
            <person name="Yasuda T."/>
            <person name="Iwayanagi T."/>
            <person name="Wagatsuma M."/>
            <person name="Shiratori A."/>
            <person name="Sudo H."/>
            <person name="Hosoiri T."/>
            <person name="Kaku Y."/>
            <person name="Kodaira H."/>
            <person name="Kondo H."/>
            <person name="Sugawara M."/>
            <person name="Takahashi M."/>
            <person name="Kanda K."/>
            <person name="Yokoi T."/>
            <person name="Furuya T."/>
            <person name="Kikkawa E."/>
            <person name="Omura Y."/>
            <person name="Abe K."/>
            <person name="Kamihara K."/>
            <person name="Katsuta N."/>
            <person name="Sato K."/>
            <person name="Tanikawa M."/>
            <person name="Yamazaki M."/>
            <person name="Ninomiya K."/>
            <person name="Ishibashi T."/>
            <person name="Yamashita H."/>
            <person name="Murakawa K."/>
            <person name="Fujimori K."/>
            <person name="Tanai H."/>
            <person name="Kimata M."/>
            <person name="Watanabe M."/>
            <person name="Hiraoka S."/>
            <person name="Chiba Y."/>
            <person name="Ishida S."/>
            <person name="Ono Y."/>
            <person name="Takiguchi S."/>
            <person name="Watanabe S."/>
            <person name="Yosida M."/>
            <person name="Hotuta T."/>
            <person name="Kusano J."/>
            <person name="Kanehori K."/>
            <person name="Takahashi-Fujii A."/>
            <person name="Hara H."/>
            <person name="Tanase T.-O."/>
            <person name="Nomura Y."/>
            <person name="Togiya S."/>
            <person name="Komai F."/>
            <person name="Hara R."/>
            <person name="Takeuchi K."/>
            <person name="Arita M."/>
            <person name="Imose N."/>
            <person name="Musashino K."/>
            <person name="Yuuki H."/>
            <person name="Oshima A."/>
            <person name="Sasaki N."/>
            <person name="Aotsuka S."/>
            <person name="Yoshikawa Y."/>
            <person name="Matsunawa H."/>
            <person name="Ichihara T."/>
            <person name="Shiohata N."/>
            <person name="Sano S."/>
            <person name="Moriya S."/>
            <person name="Momiyama H."/>
            <person name="Satoh N."/>
            <person name="Takami S."/>
            <person name="Terashima Y."/>
            <person name="Suzuki O."/>
            <person name="Nakagawa S."/>
            <person name="Senoh A."/>
            <person name="Mizoguchi H."/>
            <person name="Goto Y."/>
            <person name="Shimizu F."/>
            <person name="Wakebe H."/>
            <person name="Hishigaki H."/>
            <person name="Watanabe T."/>
            <person name="Sugiyama A."/>
            <person name="Takemoto M."/>
            <person name="Kawakami B."/>
            <person name="Yamazaki M."/>
            <person name="Watanabe K."/>
            <person name="Kumagai A."/>
            <person name="Itakura S."/>
            <person name="Fukuzumi Y."/>
            <person name="Fujimori Y."/>
            <person name="Komiyama M."/>
            <person name="Tashiro H."/>
            <person name="Tanigami A."/>
            <person name="Fujiwara T."/>
            <person name="Ono T."/>
            <person name="Yamada K."/>
            <person name="Fujii Y."/>
            <person name="Ozaki K."/>
            <person name="Hirao M."/>
            <person name="Ohmori Y."/>
            <person name="Kawabata A."/>
            <person name="Hikiji T."/>
            <person name="Kobatake N."/>
            <person name="Inagaki H."/>
            <person name="Ikema Y."/>
            <person name="Okamoto S."/>
            <person name="Okitani R."/>
            <person name="Kawakami T."/>
            <person name="Noguchi S."/>
            <person name="Itoh T."/>
            <person name="Shigeta K."/>
            <person name="Senba T."/>
            <person name="Matsumura K."/>
            <person name="Nakajima Y."/>
            <person name="Mizuno T."/>
            <person name="Morinaga M."/>
            <person name="Sasaki M."/>
            <person name="Togashi T."/>
            <person name="Oyama M."/>
            <person name="Hata H."/>
            <person name="Watanabe M."/>
            <person name="Komatsu T."/>
            <person name="Mizushima-Sugano J."/>
            <person name="Satoh T."/>
            <person name="Shirai Y."/>
            <person name="Takahashi Y."/>
            <person name="Nakagawa K."/>
            <person name="Okumura K."/>
            <person name="Nagase T."/>
            <person name="Nomura N."/>
            <person name="Kikuchi H."/>
            <person name="Masuho Y."/>
            <person name="Yamashita R."/>
            <person name="Nakai K."/>
            <person name="Yada T."/>
            <person name="Nakamura Y."/>
            <person name="Ohara O."/>
            <person name="Isogai T."/>
            <person name="Sugano S."/>
        </authorList>
    </citation>
    <scope>NUCLEOTIDE SEQUENCE [LARGE SCALE MRNA] (ISOFORM 1)</scope>
</reference>
<reference key="3">
    <citation type="journal article" date="2001" name="Nature">
        <title>The DNA sequence and comparative analysis of human chromosome 20.</title>
        <authorList>
            <person name="Deloukas P."/>
            <person name="Matthews L.H."/>
            <person name="Ashurst J.L."/>
            <person name="Burton J."/>
            <person name="Gilbert J.G.R."/>
            <person name="Jones M."/>
            <person name="Stavrides G."/>
            <person name="Almeida J.P."/>
            <person name="Babbage A.K."/>
            <person name="Bagguley C.L."/>
            <person name="Bailey J."/>
            <person name="Barlow K.F."/>
            <person name="Bates K.N."/>
            <person name="Beard L.M."/>
            <person name="Beare D.M."/>
            <person name="Beasley O.P."/>
            <person name="Bird C.P."/>
            <person name="Blakey S.E."/>
            <person name="Bridgeman A.M."/>
            <person name="Brown A.J."/>
            <person name="Buck D."/>
            <person name="Burrill W.D."/>
            <person name="Butler A.P."/>
            <person name="Carder C."/>
            <person name="Carter N.P."/>
            <person name="Chapman J.C."/>
            <person name="Clamp M."/>
            <person name="Clark G."/>
            <person name="Clark L.N."/>
            <person name="Clark S.Y."/>
            <person name="Clee C.M."/>
            <person name="Clegg S."/>
            <person name="Cobley V.E."/>
            <person name="Collier R.E."/>
            <person name="Connor R.E."/>
            <person name="Corby N.R."/>
            <person name="Coulson A."/>
            <person name="Coville G.J."/>
            <person name="Deadman R."/>
            <person name="Dhami P.D."/>
            <person name="Dunn M."/>
            <person name="Ellington A.G."/>
            <person name="Frankland J.A."/>
            <person name="Fraser A."/>
            <person name="French L."/>
            <person name="Garner P."/>
            <person name="Grafham D.V."/>
            <person name="Griffiths C."/>
            <person name="Griffiths M.N.D."/>
            <person name="Gwilliam R."/>
            <person name="Hall R.E."/>
            <person name="Hammond S."/>
            <person name="Harley J.L."/>
            <person name="Heath P.D."/>
            <person name="Ho S."/>
            <person name="Holden J.L."/>
            <person name="Howden P.J."/>
            <person name="Huckle E."/>
            <person name="Hunt A.R."/>
            <person name="Hunt S.E."/>
            <person name="Jekosch K."/>
            <person name="Johnson C.M."/>
            <person name="Johnson D."/>
            <person name="Kay M.P."/>
            <person name="Kimberley A.M."/>
            <person name="King A."/>
            <person name="Knights A."/>
            <person name="Laird G.K."/>
            <person name="Lawlor S."/>
            <person name="Lehvaeslaiho M.H."/>
            <person name="Leversha M.A."/>
            <person name="Lloyd C."/>
            <person name="Lloyd D.M."/>
            <person name="Lovell J.D."/>
            <person name="Marsh V.L."/>
            <person name="Martin S.L."/>
            <person name="McConnachie L.J."/>
            <person name="McLay K."/>
            <person name="McMurray A.A."/>
            <person name="Milne S.A."/>
            <person name="Mistry D."/>
            <person name="Moore M.J.F."/>
            <person name="Mullikin J.C."/>
            <person name="Nickerson T."/>
            <person name="Oliver K."/>
            <person name="Parker A."/>
            <person name="Patel R."/>
            <person name="Pearce T.A.V."/>
            <person name="Peck A.I."/>
            <person name="Phillimore B.J.C.T."/>
            <person name="Prathalingam S.R."/>
            <person name="Plumb R.W."/>
            <person name="Ramsay H."/>
            <person name="Rice C.M."/>
            <person name="Ross M.T."/>
            <person name="Scott C.E."/>
            <person name="Sehra H.K."/>
            <person name="Shownkeen R."/>
            <person name="Sims S."/>
            <person name="Skuce C.D."/>
            <person name="Smith M.L."/>
            <person name="Soderlund C."/>
            <person name="Steward C.A."/>
            <person name="Sulston J.E."/>
            <person name="Swann R.M."/>
            <person name="Sycamore N."/>
            <person name="Taylor R."/>
            <person name="Tee L."/>
            <person name="Thomas D.W."/>
            <person name="Thorpe A."/>
            <person name="Tracey A."/>
            <person name="Tromans A.C."/>
            <person name="Vaudin M."/>
            <person name="Wall M."/>
            <person name="Wallis J.M."/>
            <person name="Whitehead S.L."/>
            <person name="Whittaker P."/>
            <person name="Willey D.L."/>
            <person name="Williams L."/>
            <person name="Williams S.A."/>
            <person name="Wilming L."/>
            <person name="Wray P.W."/>
            <person name="Hubbard T."/>
            <person name="Durbin R.M."/>
            <person name="Bentley D.R."/>
            <person name="Beck S."/>
            <person name="Rogers J."/>
        </authorList>
    </citation>
    <scope>NUCLEOTIDE SEQUENCE [LARGE SCALE GENOMIC DNA]</scope>
</reference>
<reference key="4">
    <citation type="submission" date="2005-09" db="EMBL/GenBank/DDBJ databases">
        <authorList>
            <person name="Mural R.J."/>
            <person name="Istrail S."/>
            <person name="Sutton G.G."/>
            <person name="Florea L."/>
            <person name="Halpern A.L."/>
            <person name="Mobarry C.M."/>
            <person name="Lippert R."/>
            <person name="Walenz B."/>
            <person name="Shatkay H."/>
            <person name="Dew I."/>
            <person name="Miller J.R."/>
            <person name="Flanigan M.J."/>
            <person name="Edwards N.J."/>
            <person name="Bolanos R."/>
            <person name="Fasulo D."/>
            <person name="Halldorsson B.V."/>
            <person name="Hannenhalli S."/>
            <person name="Turner R."/>
            <person name="Yooseph S."/>
            <person name="Lu F."/>
            <person name="Nusskern D.R."/>
            <person name="Shue B.C."/>
            <person name="Zheng X.H."/>
            <person name="Zhong F."/>
            <person name="Delcher A.L."/>
            <person name="Huson D.H."/>
            <person name="Kravitz S.A."/>
            <person name="Mouchard L."/>
            <person name="Reinert K."/>
            <person name="Remington K.A."/>
            <person name="Clark A.G."/>
            <person name="Waterman M.S."/>
            <person name="Eichler E.E."/>
            <person name="Adams M.D."/>
            <person name="Hunkapiller M.W."/>
            <person name="Myers E.W."/>
            <person name="Venter J.C."/>
        </authorList>
    </citation>
    <scope>NUCLEOTIDE SEQUENCE [LARGE SCALE GENOMIC DNA]</scope>
</reference>
<reference key="5">
    <citation type="journal article" date="2004" name="Genome Res.">
        <title>The status, quality, and expansion of the NIH full-length cDNA project: the Mammalian Gene Collection (MGC).</title>
        <authorList>
            <consortium name="The MGC Project Team"/>
        </authorList>
    </citation>
    <scope>NUCLEOTIDE SEQUENCE [LARGE SCALE MRNA] (ISOFORM 1)</scope>
    <scope>NUCLEOTIDE SEQUENCE [LARGE SCALE MRNA] OF 1-110 (ISOFORM 2)</scope>
    <source>
        <tissue>Brain</tissue>
        <tissue>Eye</tissue>
    </source>
</reference>
<reference key="6">
    <citation type="journal article" date="2011" name="BMC Syst. Biol.">
        <title>Initial characterization of the human central proteome.</title>
        <authorList>
            <person name="Burkard T.R."/>
            <person name="Planyavsky M."/>
            <person name="Kaupe I."/>
            <person name="Breitwieser F.P."/>
            <person name="Buerckstuemmer T."/>
            <person name="Bennett K.L."/>
            <person name="Superti-Furga G."/>
            <person name="Colinge J."/>
        </authorList>
    </citation>
    <scope>IDENTIFICATION BY MASS SPECTROMETRY [LARGE SCALE ANALYSIS]</scope>
</reference>
<reference key="7">
    <citation type="journal article" date="2011" name="J. Biol. Chem.">
        <title>COMMD1 (copper metabolism MURR1 domain-containing protein 1) regulates Cullin RING ligases by preventing CAND1 (Cullin-associated Nedd8-dissociated protein 1) binding.</title>
        <authorList>
            <person name="Mao X."/>
            <person name="Gluck N."/>
            <person name="Chen B."/>
            <person name="Starokadomskyy P."/>
            <person name="Li H."/>
            <person name="Maine G.N."/>
            <person name="Burstein E."/>
        </authorList>
    </citation>
    <scope>FUNCTION</scope>
    <scope>INTERACTION WITH CUL7</scope>
    <scope>SUBCELLULAR LOCATION</scope>
</reference>
<reference key="8">
    <citation type="journal article" date="2013" name="Am. J. Physiol.">
        <title>Functional interaction of COMMD3 and COMMD9 with the epithelial sodium channel.</title>
        <authorList>
            <person name="Liu Y.F."/>
            <person name="Swart M."/>
            <person name="Ke Y."/>
            <person name="Ly K."/>
            <person name="McDonald F.J."/>
        </authorList>
    </citation>
    <scope>INTERACTION WITH SCNN1B</scope>
</reference>
<reference key="9">
    <citation type="journal article" date="2013" name="J. Clin. Invest.">
        <title>CCDC22 deficiency in humans blunts activation of proinflammatory NF-kappaB signaling.</title>
        <authorList>
            <person name="Starokadomskyy P."/>
            <person name="Gluck N."/>
            <person name="Li H."/>
            <person name="Chen B."/>
            <person name="Wallis M."/>
            <person name="Maine G.N."/>
            <person name="Mao X."/>
            <person name="Zaidi I.W."/>
            <person name="Hein M.Y."/>
            <person name="McDonald F.J."/>
            <person name="Lenzner S."/>
            <person name="Zecha A."/>
            <person name="Ropers H.H."/>
            <person name="Kuss A.W."/>
            <person name="McGaughran J."/>
            <person name="Gecz J."/>
            <person name="Burstein E."/>
        </authorList>
    </citation>
    <scope>INTERACTION WITH CCDC22</scope>
</reference>
<reference key="10">
    <citation type="journal article" date="2014" name="J. Proteomics">
        <title>An enzyme assisted RP-RPLC approach for in-depth analysis of human liver phosphoproteome.</title>
        <authorList>
            <person name="Bian Y."/>
            <person name="Song C."/>
            <person name="Cheng K."/>
            <person name="Dong M."/>
            <person name="Wang F."/>
            <person name="Huang J."/>
            <person name="Sun D."/>
            <person name="Wang L."/>
            <person name="Ye M."/>
            <person name="Zou H."/>
        </authorList>
    </citation>
    <scope>IDENTIFICATION BY MASS SPECTROMETRY [LARGE SCALE ANALYSIS]</scope>
    <source>
        <tissue>Liver</tissue>
    </source>
</reference>
<reference key="11">
    <citation type="journal article" date="2015" name="Mol. Biol. Cell">
        <title>COMMD1 is linked to the WASH complex and regulates endosomal trafficking of the copper transporter ATP7A.</title>
        <authorList>
            <person name="Phillips-Krawczak C.A."/>
            <person name="Singla A."/>
            <person name="Starokadomskyy P."/>
            <person name="Deng Z."/>
            <person name="Osborne D.G."/>
            <person name="Li H."/>
            <person name="Dick C.J."/>
            <person name="Gomez T.S."/>
            <person name="Koenecke M."/>
            <person name="Zhang J.S."/>
            <person name="Dai H."/>
            <person name="Sifuentes-Dominguez L.F."/>
            <person name="Geng L.N."/>
            <person name="Kaufmann S.H."/>
            <person name="Hein M.Y."/>
            <person name="Wallis M."/>
            <person name="McGaughran J."/>
            <person name="Gecz J."/>
            <person name="van de Sluis B."/>
            <person name="Billadeau D.D."/>
            <person name="Burstein E."/>
        </authorList>
    </citation>
    <scope>INTERACTION WITH CCDC93</scope>
</reference>
<reference key="12">
    <citation type="journal article" date="2015" name="Proteomics">
        <title>N-terminome analysis of the human mitochondrial proteome.</title>
        <authorList>
            <person name="Vaca Jacome A.S."/>
            <person name="Rabilloud T."/>
            <person name="Schaeffer-Reiss C."/>
            <person name="Rompais M."/>
            <person name="Ayoub D."/>
            <person name="Lane L."/>
            <person name="Bairoch A."/>
            <person name="Van Dorsselaer A."/>
            <person name="Carapito C."/>
        </authorList>
    </citation>
    <scope>IDENTIFICATION BY MASS SPECTROMETRY [LARGE SCALE ANALYSIS]</scope>
</reference>
<reference evidence="12 13 14" key="13">
    <citation type="journal article" date="2023" name="Cell">
        <title>Structure of the endosomal commander complex linked to Ritscher-Schinzel syndrome.</title>
        <authorList>
            <person name="Healy M.D."/>
            <person name="McNally K.E."/>
            <person name="Butkovic R."/>
            <person name="Chilton M."/>
            <person name="Kato K."/>
            <person name="Sacharz J."/>
            <person name="McConville C."/>
            <person name="Moody E.R.R."/>
            <person name="Shaw S."/>
            <person name="Planelles-Herrero V.J."/>
            <person name="Yadav S.K.N."/>
            <person name="Ross J."/>
            <person name="Borucu U."/>
            <person name="Palmer C.S."/>
            <person name="Chen K.E."/>
            <person name="Croll T.I."/>
            <person name="Hall R.J."/>
            <person name="Caruana N.J."/>
            <person name="Ghai R."/>
            <person name="Nguyen T.H.D."/>
            <person name="Heesom K.J."/>
            <person name="Saitoh S."/>
            <person name="Berger I."/>
            <person name="Schaffitzel C."/>
            <person name="Williams T.A."/>
            <person name="Stroud D.A."/>
            <person name="Derivery E."/>
            <person name="Collins B.M."/>
            <person name="Cullen P.J."/>
        </authorList>
    </citation>
    <scope>STRUCTURE BY ELECTRON MICROSCOPY (3.12 ANGSTROMS) OF THE CCC COMPLEX</scope>
    <scope>FUNCTION</scope>
    <scope>SUBUNIT</scope>
</reference>
<reference evidence="15" key="14">
    <citation type="journal article" date="2024" name="Nat. Struct. Mol. Biol.">
        <title>Structure and interactions of the endogenous human commander complex.</title>
        <authorList>
            <person name="Laulumaa S."/>
            <person name="Kumpula E.P."/>
            <person name="Huiskonen J.T."/>
            <person name="Varjosalo M."/>
        </authorList>
    </citation>
    <scope>STRUCTURE BY ELECTRON MICROSCOPY (2.90 ANGSTROMS) OF THE CCC COMPLEX</scope>
    <scope>FUNCTION</scope>
    <scope>SUBUNIT</scope>
</reference>
<organism>
    <name type="scientific">Homo sapiens</name>
    <name type="common">Human</name>
    <dbReference type="NCBI Taxonomy" id="9606"/>
    <lineage>
        <taxon>Eukaryota</taxon>
        <taxon>Metazoa</taxon>
        <taxon>Chordata</taxon>
        <taxon>Craniata</taxon>
        <taxon>Vertebrata</taxon>
        <taxon>Euteleostomi</taxon>
        <taxon>Mammalia</taxon>
        <taxon>Eutheria</taxon>
        <taxon>Euarchontoglires</taxon>
        <taxon>Primates</taxon>
        <taxon>Haplorrhini</taxon>
        <taxon>Catarrhini</taxon>
        <taxon>Hominidae</taxon>
        <taxon>Homo</taxon>
    </lineage>
</organism>
<gene>
    <name type="primary">COMMD7</name>
    <name type="synonym">C20orf92</name>
</gene>
<dbReference type="EMBL" id="AY542162">
    <property type="protein sequence ID" value="AAS22244.1"/>
    <property type="molecule type" value="mRNA"/>
</dbReference>
<dbReference type="EMBL" id="AK027893">
    <property type="protein sequence ID" value="BAB55436.1"/>
    <property type="molecule type" value="mRNA"/>
</dbReference>
<dbReference type="EMBL" id="AK096307">
    <property type="protein sequence ID" value="BAG53254.1"/>
    <property type="molecule type" value="mRNA"/>
</dbReference>
<dbReference type="EMBL" id="AL035071">
    <property type="status" value="NOT_ANNOTATED_CDS"/>
    <property type="molecule type" value="Genomic_DNA"/>
</dbReference>
<dbReference type="EMBL" id="BX640505">
    <property type="status" value="NOT_ANNOTATED_CDS"/>
    <property type="molecule type" value="Genomic_DNA"/>
</dbReference>
<dbReference type="EMBL" id="FO393400">
    <property type="status" value="NOT_ANNOTATED_CDS"/>
    <property type="molecule type" value="Genomic_DNA"/>
</dbReference>
<dbReference type="EMBL" id="CH471077">
    <property type="protein sequence ID" value="EAW76360.1"/>
    <property type="molecule type" value="Genomic_DNA"/>
</dbReference>
<dbReference type="EMBL" id="BC000628">
    <property type="protein sequence ID" value="AAH00628.3"/>
    <property type="molecule type" value="mRNA"/>
</dbReference>
<dbReference type="EMBL" id="BC047440">
    <property type="protein sequence ID" value="AAH47440.1"/>
    <property type="molecule type" value="mRNA"/>
</dbReference>
<dbReference type="EMBL" id="BI821799">
    <property type="status" value="NOT_ANNOTATED_CDS"/>
    <property type="molecule type" value="mRNA"/>
</dbReference>
<dbReference type="CCDS" id="CCDS42864.1">
    <molecule id="Q86VX2-1"/>
</dbReference>
<dbReference type="CCDS" id="CCDS46587.1">
    <molecule id="Q86VX2-2"/>
</dbReference>
<dbReference type="RefSeq" id="NP_001092809.1">
    <molecule id="Q86VX2-2"/>
    <property type="nucleotide sequence ID" value="NM_001099339.2"/>
</dbReference>
<dbReference type="RefSeq" id="NP_444269.2">
    <molecule id="Q86VX2-1"/>
    <property type="nucleotide sequence ID" value="NM_053041.3"/>
</dbReference>
<dbReference type="PDB" id="8ESD">
    <property type="method" value="X-ray"/>
    <property type="resolution" value="3.33 A"/>
    <property type="chains" value="S=131-200"/>
</dbReference>
<dbReference type="PDB" id="8F2R">
    <property type="method" value="EM"/>
    <property type="resolution" value="3.12 A"/>
    <property type="chains" value="G=1-200"/>
</dbReference>
<dbReference type="PDB" id="8F2U">
    <property type="method" value="EM"/>
    <property type="resolution" value="3.53 A"/>
    <property type="chains" value="G=1-200"/>
</dbReference>
<dbReference type="PDB" id="8P0W">
    <property type="method" value="EM"/>
    <property type="resolution" value="2.90 A"/>
    <property type="chains" value="G=1-200"/>
</dbReference>
<dbReference type="PDBsum" id="8ESD"/>
<dbReference type="PDBsum" id="8F2R"/>
<dbReference type="PDBsum" id="8F2U"/>
<dbReference type="PDBsum" id="8P0W"/>
<dbReference type="EMDB" id="EMD-17340"/>
<dbReference type="EMDB" id="EMD-17342"/>
<dbReference type="EMDB" id="EMD-28825"/>
<dbReference type="EMDB" id="EMD-28827"/>
<dbReference type="SMR" id="Q86VX2"/>
<dbReference type="BioGRID" id="127250">
    <property type="interactions" value="27"/>
</dbReference>
<dbReference type="ComplexPortal" id="CPX-2211">
    <property type="entry name" value="Commander complex"/>
</dbReference>
<dbReference type="CORUM" id="Q86VX2"/>
<dbReference type="FunCoup" id="Q86VX2">
    <property type="interactions" value="323"/>
</dbReference>
<dbReference type="IntAct" id="Q86VX2">
    <property type="interactions" value="25"/>
</dbReference>
<dbReference type="MINT" id="Q86VX2"/>
<dbReference type="STRING" id="9606.ENSP00000278980"/>
<dbReference type="iPTMnet" id="Q86VX2"/>
<dbReference type="PhosphoSitePlus" id="Q86VX2"/>
<dbReference type="BioMuta" id="COMMD7"/>
<dbReference type="DMDM" id="108935829"/>
<dbReference type="jPOST" id="Q86VX2"/>
<dbReference type="MassIVE" id="Q86VX2"/>
<dbReference type="PaxDb" id="9606-ENSP00000278980"/>
<dbReference type="PeptideAtlas" id="Q86VX2"/>
<dbReference type="ProteomicsDB" id="70084">
    <molecule id="Q86VX2-1"/>
</dbReference>
<dbReference type="ProteomicsDB" id="70085">
    <molecule id="Q86VX2-2"/>
</dbReference>
<dbReference type="Pumba" id="Q86VX2"/>
<dbReference type="TopDownProteomics" id="Q86VX2-1">
    <molecule id="Q86VX2-1"/>
</dbReference>
<dbReference type="TopDownProteomics" id="Q86VX2-2">
    <molecule id="Q86VX2-2"/>
</dbReference>
<dbReference type="Antibodypedia" id="25401">
    <property type="antibodies" value="105 antibodies from 24 providers"/>
</dbReference>
<dbReference type="DNASU" id="149951"/>
<dbReference type="Ensembl" id="ENST00000278980.11">
    <molecule id="Q86VX2-1"/>
    <property type="protein sequence ID" value="ENSP00000278980.6"/>
    <property type="gene ID" value="ENSG00000149600.12"/>
</dbReference>
<dbReference type="Ensembl" id="ENST00000446419.6">
    <molecule id="Q86VX2-2"/>
    <property type="protein sequence ID" value="ENSP00000395339.1"/>
    <property type="gene ID" value="ENSG00000149600.12"/>
</dbReference>
<dbReference type="GeneID" id="149951"/>
<dbReference type="KEGG" id="hsa:149951"/>
<dbReference type="MANE-Select" id="ENST00000278980.11">
    <property type="protein sequence ID" value="ENSP00000278980.6"/>
    <property type="RefSeq nucleotide sequence ID" value="NM_053041.3"/>
    <property type="RefSeq protein sequence ID" value="NP_444269.2"/>
</dbReference>
<dbReference type="UCSC" id="uc002wya.5">
    <molecule id="Q86VX2-1"/>
    <property type="organism name" value="human"/>
</dbReference>
<dbReference type="AGR" id="HGNC:16223"/>
<dbReference type="CTD" id="149951"/>
<dbReference type="DisGeNET" id="149951"/>
<dbReference type="GeneCards" id="COMMD7"/>
<dbReference type="HGNC" id="HGNC:16223">
    <property type="gene designation" value="COMMD7"/>
</dbReference>
<dbReference type="HPA" id="ENSG00000149600">
    <property type="expression patterns" value="Low tissue specificity"/>
</dbReference>
<dbReference type="MIM" id="616703">
    <property type="type" value="gene"/>
</dbReference>
<dbReference type="neXtProt" id="NX_Q86VX2"/>
<dbReference type="OpenTargets" id="ENSG00000149600"/>
<dbReference type="PharmGKB" id="PA25799"/>
<dbReference type="VEuPathDB" id="HostDB:ENSG00000149600"/>
<dbReference type="eggNOG" id="ENOG502QQ17">
    <property type="taxonomic scope" value="Eukaryota"/>
</dbReference>
<dbReference type="GeneTree" id="ENSGT00390000012419"/>
<dbReference type="HOGENOM" id="CLU_118172_0_0_1"/>
<dbReference type="InParanoid" id="Q86VX2"/>
<dbReference type="OMA" id="SQQWGEH"/>
<dbReference type="OrthoDB" id="76101at2759"/>
<dbReference type="PAN-GO" id="Q86VX2">
    <property type="GO annotations" value="4 GO annotations based on evolutionary models"/>
</dbReference>
<dbReference type="PhylomeDB" id="Q86VX2"/>
<dbReference type="TreeFam" id="TF329046"/>
<dbReference type="PathwayCommons" id="Q86VX2"/>
<dbReference type="Reactome" id="R-HSA-8951664">
    <property type="pathway name" value="Neddylation"/>
</dbReference>
<dbReference type="SignaLink" id="Q86VX2"/>
<dbReference type="BioGRID-ORCS" id="149951">
    <property type="hits" value="23 hits in 1159 CRISPR screens"/>
</dbReference>
<dbReference type="ChiTaRS" id="COMMD7">
    <property type="organism name" value="human"/>
</dbReference>
<dbReference type="GenomeRNAi" id="149951"/>
<dbReference type="Pharos" id="Q86VX2">
    <property type="development level" value="Tbio"/>
</dbReference>
<dbReference type="PRO" id="PR:Q86VX2"/>
<dbReference type="Proteomes" id="UP000005640">
    <property type="component" value="Chromosome 20"/>
</dbReference>
<dbReference type="RNAct" id="Q86VX2">
    <property type="molecule type" value="protein"/>
</dbReference>
<dbReference type="Bgee" id="ENSG00000149600">
    <property type="expression patterns" value="Expressed in kidney epithelium and 187 other cell types or tissues"/>
</dbReference>
<dbReference type="ExpressionAtlas" id="Q86VX2">
    <property type="expression patterns" value="baseline and differential"/>
</dbReference>
<dbReference type="GO" id="GO:0031410">
    <property type="term" value="C:cytoplasmic vesicle"/>
    <property type="evidence" value="ECO:0007669"/>
    <property type="project" value="UniProtKB-KW"/>
</dbReference>
<dbReference type="GO" id="GO:0051059">
    <property type="term" value="F:NF-kappaB binding"/>
    <property type="evidence" value="ECO:0000314"/>
    <property type="project" value="UniProtKB"/>
</dbReference>
<dbReference type="GO" id="GO:0045892">
    <property type="term" value="P:negative regulation of DNA-templated transcription"/>
    <property type="evidence" value="ECO:0000314"/>
    <property type="project" value="UniProtKB"/>
</dbReference>
<dbReference type="GO" id="GO:0032088">
    <property type="term" value="P:negative regulation of NF-kappaB transcription factor activity"/>
    <property type="evidence" value="ECO:0000314"/>
    <property type="project" value="UniProtKB"/>
</dbReference>
<dbReference type="GO" id="GO:0033209">
    <property type="term" value="P:tumor necrosis factor-mediated signaling pathway"/>
    <property type="evidence" value="ECO:0000314"/>
    <property type="project" value="UniProtKB"/>
</dbReference>
<dbReference type="CDD" id="cd04755">
    <property type="entry name" value="Commd7"/>
    <property type="match status" value="1"/>
</dbReference>
<dbReference type="InterPro" id="IPR017920">
    <property type="entry name" value="COMM"/>
</dbReference>
<dbReference type="InterPro" id="IPR047155">
    <property type="entry name" value="COMMD4/6/7/8"/>
</dbReference>
<dbReference type="InterPro" id="IPR037358">
    <property type="entry name" value="COMMD7"/>
</dbReference>
<dbReference type="PANTHER" id="PTHR16231">
    <property type="entry name" value="COMM DOMAIN-CONTAINING PROTEIN 4-8 FAMILY MEMBER"/>
    <property type="match status" value="1"/>
</dbReference>
<dbReference type="PANTHER" id="PTHR16231:SF2">
    <property type="entry name" value="COMM DOMAIN-CONTAINING PROTEIN 7"/>
    <property type="match status" value="1"/>
</dbReference>
<dbReference type="Pfam" id="PF07258">
    <property type="entry name" value="COMM_domain"/>
    <property type="match status" value="1"/>
</dbReference>
<dbReference type="Pfam" id="PF21672">
    <property type="entry name" value="COMM_HN"/>
    <property type="match status" value="1"/>
</dbReference>
<dbReference type="PROSITE" id="PS51269">
    <property type="entry name" value="COMM"/>
    <property type="match status" value="1"/>
</dbReference>
<keyword id="KW-0002">3D-structure</keyword>
<keyword id="KW-0025">Alternative splicing</keyword>
<keyword id="KW-0968">Cytoplasmic vesicle</keyword>
<keyword id="KW-1267">Proteomics identification</keyword>
<keyword id="KW-1185">Reference proteome</keyword>
<keyword id="KW-0804">Transcription</keyword>
<keyword id="KW-0805">Transcription regulation</keyword>
<keyword id="KW-0833">Ubl conjugation pathway</keyword>
<name>COMD7_HUMAN</name>